<reference key="1">
    <citation type="journal article" date="2007" name="J. Bacteriol.">
        <title>Complete genome of acute rheumatic fever-associated serotype M5 Streptococcus pyogenes strain Manfredo.</title>
        <authorList>
            <person name="Holden M.T.G."/>
            <person name="Scott A."/>
            <person name="Cherevach I."/>
            <person name="Chillingworth T."/>
            <person name="Churcher C."/>
            <person name="Cronin A."/>
            <person name="Dowd L."/>
            <person name="Feltwell T."/>
            <person name="Hamlin N."/>
            <person name="Holroyd S."/>
            <person name="Jagels K."/>
            <person name="Moule S."/>
            <person name="Mungall K."/>
            <person name="Quail M.A."/>
            <person name="Price C."/>
            <person name="Rabbinowitsch E."/>
            <person name="Sharp S."/>
            <person name="Skelton J."/>
            <person name="Whitehead S."/>
            <person name="Barrell B.G."/>
            <person name="Kehoe M."/>
            <person name="Parkhill J."/>
        </authorList>
    </citation>
    <scope>NUCLEOTIDE SEQUENCE [LARGE SCALE GENOMIC DNA]</scope>
    <source>
        <strain>Manfredo</strain>
    </source>
</reference>
<accession>A2RCG2</accession>
<proteinExistence type="inferred from homology"/>
<name>NANE_STRPG</name>
<gene>
    <name evidence="1" type="primary">nanE</name>
    <name type="ordered locus">SpyM50191</name>
</gene>
<keyword id="KW-0119">Carbohydrate metabolism</keyword>
<keyword id="KW-0413">Isomerase</keyword>
<protein>
    <recommendedName>
        <fullName evidence="1">Putative N-acetylmannosamine-6-phosphate 2-epimerase</fullName>
        <ecNumber evidence="1">5.1.3.9</ecNumber>
    </recommendedName>
    <alternativeName>
        <fullName evidence="1">ManNAc-6-P epimerase</fullName>
    </alternativeName>
</protein>
<comment type="function">
    <text evidence="1">Converts N-acetylmannosamine-6-phosphate (ManNAc-6-P) to N-acetylglucosamine-6-phosphate (GlcNAc-6-P).</text>
</comment>
<comment type="catalytic activity">
    <reaction evidence="1">
        <text>an N-acyl-D-glucosamine 6-phosphate = an N-acyl-D-mannosamine 6-phosphate</text>
        <dbReference type="Rhea" id="RHEA:23932"/>
        <dbReference type="ChEBI" id="CHEBI:57599"/>
        <dbReference type="ChEBI" id="CHEBI:57666"/>
        <dbReference type="EC" id="5.1.3.9"/>
    </reaction>
</comment>
<comment type="pathway">
    <text evidence="1">Amino-sugar metabolism; N-acetylneuraminate degradation; D-fructose 6-phosphate from N-acetylneuraminate: step 3/5.</text>
</comment>
<comment type="similarity">
    <text evidence="1">Belongs to the NanE family.</text>
</comment>
<sequence>MPDKPTKEKLMEQLKGGIIVSCQALPGEPLYSETGGIMPLLAKAAQEAGAVGIRANSVRDIKEIQAITDLPIIGIIKKDYPPQEPFITATMTEVDQLAALNIAVIAMDCTKRDRHDGLDIASFIRQVKEKYPNQLLMADISTFDEGLVAHQAGIDFVGTTLSGYTPYSCQEAGPDVALIEALCKVGIAVIAEGKIHSPEEAKKINDLGVAGIVVGGAITRPKEIAERFIEALKS</sequence>
<evidence type="ECO:0000255" key="1">
    <source>
        <dbReference type="HAMAP-Rule" id="MF_01235"/>
    </source>
</evidence>
<feature type="chain" id="PRO_0000301495" description="Putative N-acetylmannosamine-6-phosphate 2-epimerase">
    <location>
        <begin position="1"/>
        <end position="234"/>
    </location>
</feature>
<organism>
    <name type="scientific">Streptococcus pyogenes serotype M5 (strain Manfredo)</name>
    <dbReference type="NCBI Taxonomy" id="160491"/>
    <lineage>
        <taxon>Bacteria</taxon>
        <taxon>Bacillati</taxon>
        <taxon>Bacillota</taxon>
        <taxon>Bacilli</taxon>
        <taxon>Lactobacillales</taxon>
        <taxon>Streptococcaceae</taxon>
        <taxon>Streptococcus</taxon>
    </lineage>
</organism>
<dbReference type="EC" id="5.1.3.9" evidence="1"/>
<dbReference type="EMBL" id="AM295007">
    <property type="protein sequence ID" value="CAM29534.1"/>
    <property type="molecule type" value="Genomic_DNA"/>
</dbReference>
<dbReference type="RefSeq" id="WP_011888581.1">
    <property type="nucleotide sequence ID" value="NC_009332.1"/>
</dbReference>
<dbReference type="SMR" id="A2RCG2"/>
<dbReference type="KEGG" id="spf:SpyM50191"/>
<dbReference type="HOGENOM" id="CLU_086300_1_0_9"/>
<dbReference type="UniPathway" id="UPA00629">
    <property type="reaction ID" value="UER00682"/>
</dbReference>
<dbReference type="GO" id="GO:0005829">
    <property type="term" value="C:cytosol"/>
    <property type="evidence" value="ECO:0007669"/>
    <property type="project" value="TreeGrafter"/>
</dbReference>
<dbReference type="GO" id="GO:0047465">
    <property type="term" value="F:N-acylglucosamine-6-phosphate 2-epimerase activity"/>
    <property type="evidence" value="ECO:0007669"/>
    <property type="project" value="UniProtKB-EC"/>
</dbReference>
<dbReference type="GO" id="GO:0005975">
    <property type="term" value="P:carbohydrate metabolic process"/>
    <property type="evidence" value="ECO:0007669"/>
    <property type="project" value="UniProtKB-UniRule"/>
</dbReference>
<dbReference type="GO" id="GO:0006053">
    <property type="term" value="P:N-acetylmannosamine catabolic process"/>
    <property type="evidence" value="ECO:0007669"/>
    <property type="project" value="TreeGrafter"/>
</dbReference>
<dbReference type="GO" id="GO:0019262">
    <property type="term" value="P:N-acetylneuraminate catabolic process"/>
    <property type="evidence" value="ECO:0007669"/>
    <property type="project" value="UniProtKB-UniRule"/>
</dbReference>
<dbReference type="CDD" id="cd04729">
    <property type="entry name" value="NanE"/>
    <property type="match status" value="1"/>
</dbReference>
<dbReference type="FunFam" id="3.20.20.70:FF:000035">
    <property type="entry name" value="Putative N-acetylmannosamine-6-phosphate 2-epimerase"/>
    <property type="match status" value="1"/>
</dbReference>
<dbReference type="Gene3D" id="3.20.20.70">
    <property type="entry name" value="Aldolase class I"/>
    <property type="match status" value="1"/>
</dbReference>
<dbReference type="HAMAP" id="MF_01235">
    <property type="entry name" value="ManNAc6P_epimer"/>
    <property type="match status" value="1"/>
</dbReference>
<dbReference type="InterPro" id="IPR013785">
    <property type="entry name" value="Aldolase_TIM"/>
</dbReference>
<dbReference type="InterPro" id="IPR007260">
    <property type="entry name" value="NanE"/>
</dbReference>
<dbReference type="InterPro" id="IPR011060">
    <property type="entry name" value="RibuloseP-bd_barrel"/>
</dbReference>
<dbReference type="NCBIfam" id="NF002231">
    <property type="entry name" value="PRK01130.1"/>
    <property type="match status" value="1"/>
</dbReference>
<dbReference type="PANTHER" id="PTHR36204">
    <property type="entry name" value="N-ACETYLMANNOSAMINE-6-PHOSPHATE 2-EPIMERASE-RELATED"/>
    <property type="match status" value="1"/>
</dbReference>
<dbReference type="PANTHER" id="PTHR36204:SF1">
    <property type="entry name" value="N-ACETYLMANNOSAMINE-6-PHOSPHATE 2-EPIMERASE-RELATED"/>
    <property type="match status" value="1"/>
</dbReference>
<dbReference type="Pfam" id="PF04131">
    <property type="entry name" value="NanE"/>
    <property type="match status" value="1"/>
</dbReference>
<dbReference type="SUPFAM" id="SSF51366">
    <property type="entry name" value="Ribulose-phoshate binding barrel"/>
    <property type="match status" value="1"/>
</dbReference>